<proteinExistence type="inferred from homology"/>
<evidence type="ECO:0000255" key="1">
    <source>
        <dbReference type="HAMAP-Rule" id="MF_01235"/>
    </source>
</evidence>
<name>NANE_STAA2</name>
<comment type="function">
    <text evidence="1">Converts N-acetylmannosamine-6-phosphate (ManNAc-6-P) to N-acetylglucosamine-6-phosphate (GlcNAc-6-P).</text>
</comment>
<comment type="catalytic activity">
    <reaction evidence="1">
        <text>an N-acyl-D-glucosamine 6-phosphate = an N-acyl-D-mannosamine 6-phosphate</text>
        <dbReference type="Rhea" id="RHEA:23932"/>
        <dbReference type="ChEBI" id="CHEBI:57599"/>
        <dbReference type="ChEBI" id="CHEBI:57666"/>
        <dbReference type="EC" id="5.1.3.9"/>
    </reaction>
</comment>
<comment type="pathway">
    <text evidence="1">Amino-sugar metabolism; N-acetylneuraminate degradation; D-fructose 6-phosphate from N-acetylneuraminate: step 3/5.</text>
</comment>
<comment type="similarity">
    <text evidence="1">Belongs to the NanE family.</text>
</comment>
<sequence length="222" mass="24505">MLPHGLIVSCQALADEPLHSSFIMSKMALAAYEGGAVGIRANTKEDILAIKETVDLPVIGIVKRDYDHSDVFITATSKEVDELIESQCEVIALDATLQQRPKETLDELVSYIRTHAPNVEIMADIATVEEAKNAARLGFDYIGTTLHGYTSYTQGQLLYQNDFQFLKDVLQSVDAKVIAEGNVITPDMYKRVMDLGVHCSVVGGAITRPKEITKRFVQVMED</sequence>
<reference key="1">
    <citation type="submission" date="2007-06" db="EMBL/GenBank/DDBJ databases">
        <title>Complete sequence of chromosome of Staphylococcus aureus subsp. aureus JH1.</title>
        <authorList>
            <consortium name="US DOE Joint Genome Institute"/>
            <person name="Copeland A."/>
            <person name="Lucas S."/>
            <person name="Lapidus A."/>
            <person name="Barry K."/>
            <person name="Detter J.C."/>
            <person name="Glavina del Rio T."/>
            <person name="Hammon N."/>
            <person name="Israni S."/>
            <person name="Dalin E."/>
            <person name="Tice H."/>
            <person name="Pitluck S."/>
            <person name="Chain P."/>
            <person name="Malfatti S."/>
            <person name="Shin M."/>
            <person name="Vergez L."/>
            <person name="Schmutz J."/>
            <person name="Larimer F."/>
            <person name="Land M."/>
            <person name="Hauser L."/>
            <person name="Kyrpides N."/>
            <person name="Ivanova N."/>
            <person name="Tomasz A."/>
            <person name="Richardson P."/>
        </authorList>
    </citation>
    <scope>NUCLEOTIDE SEQUENCE [LARGE SCALE GENOMIC DNA]</scope>
    <source>
        <strain>JH1</strain>
    </source>
</reference>
<feature type="chain" id="PRO_1000085730" description="Putative N-acetylmannosamine-6-phosphate 2-epimerase">
    <location>
        <begin position="1"/>
        <end position="222"/>
    </location>
</feature>
<keyword id="KW-0119">Carbohydrate metabolism</keyword>
<keyword id="KW-0413">Isomerase</keyword>
<dbReference type="EC" id="5.1.3.9" evidence="1"/>
<dbReference type="EMBL" id="CP000736">
    <property type="protein sequence ID" value="ABR51170.1"/>
    <property type="molecule type" value="Genomic_DNA"/>
</dbReference>
<dbReference type="SMR" id="A6TYA2"/>
<dbReference type="KEGG" id="sah:SaurJH1_0308"/>
<dbReference type="HOGENOM" id="CLU_086300_1_0_9"/>
<dbReference type="UniPathway" id="UPA00629">
    <property type="reaction ID" value="UER00682"/>
</dbReference>
<dbReference type="GO" id="GO:0005829">
    <property type="term" value="C:cytosol"/>
    <property type="evidence" value="ECO:0007669"/>
    <property type="project" value="TreeGrafter"/>
</dbReference>
<dbReference type="GO" id="GO:0047465">
    <property type="term" value="F:N-acylglucosamine-6-phosphate 2-epimerase activity"/>
    <property type="evidence" value="ECO:0007669"/>
    <property type="project" value="UniProtKB-EC"/>
</dbReference>
<dbReference type="GO" id="GO:0005975">
    <property type="term" value="P:carbohydrate metabolic process"/>
    <property type="evidence" value="ECO:0007669"/>
    <property type="project" value="UniProtKB-UniRule"/>
</dbReference>
<dbReference type="GO" id="GO:0006053">
    <property type="term" value="P:N-acetylmannosamine catabolic process"/>
    <property type="evidence" value="ECO:0007669"/>
    <property type="project" value="TreeGrafter"/>
</dbReference>
<dbReference type="GO" id="GO:0019262">
    <property type="term" value="P:N-acetylneuraminate catabolic process"/>
    <property type="evidence" value="ECO:0007669"/>
    <property type="project" value="UniProtKB-UniRule"/>
</dbReference>
<dbReference type="CDD" id="cd04729">
    <property type="entry name" value="NanE"/>
    <property type="match status" value="1"/>
</dbReference>
<dbReference type="FunFam" id="3.20.20.70:FF:000035">
    <property type="entry name" value="Putative N-acetylmannosamine-6-phosphate 2-epimerase"/>
    <property type="match status" value="1"/>
</dbReference>
<dbReference type="Gene3D" id="3.20.20.70">
    <property type="entry name" value="Aldolase class I"/>
    <property type="match status" value="1"/>
</dbReference>
<dbReference type="HAMAP" id="MF_01235">
    <property type="entry name" value="ManNAc6P_epimer"/>
    <property type="match status" value="1"/>
</dbReference>
<dbReference type="InterPro" id="IPR013785">
    <property type="entry name" value="Aldolase_TIM"/>
</dbReference>
<dbReference type="InterPro" id="IPR007260">
    <property type="entry name" value="NanE"/>
</dbReference>
<dbReference type="InterPro" id="IPR011060">
    <property type="entry name" value="RibuloseP-bd_barrel"/>
</dbReference>
<dbReference type="NCBIfam" id="NF002231">
    <property type="entry name" value="PRK01130.1"/>
    <property type="match status" value="1"/>
</dbReference>
<dbReference type="PANTHER" id="PTHR36204">
    <property type="entry name" value="N-ACETYLMANNOSAMINE-6-PHOSPHATE 2-EPIMERASE-RELATED"/>
    <property type="match status" value="1"/>
</dbReference>
<dbReference type="PANTHER" id="PTHR36204:SF1">
    <property type="entry name" value="N-ACETYLMANNOSAMINE-6-PHOSPHATE 2-EPIMERASE-RELATED"/>
    <property type="match status" value="1"/>
</dbReference>
<dbReference type="Pfam" id="PF04131">
    <property type="entry name" value="NanE"/>
    <property type="match status" value="1"/>
</dbReference>
<dbReference type="SUPFAM" id="SSF51366">
    <property type="entry name" value="Ribulose-phoshate binding barrel"/>
    <property type="match status" value="1"/>
</dbReference>
<gene>
    <name evidence="1" type="primary">nanE</name>
    <name type="ordered locus">SaurJH1_0308</name>
</gene>
<accession>A6TYA2</accession>
<protein>
    <recommendedName>
        <fullName evidence="1">Putative N-acetylmannosamine-6-phosphate 2-epimerase</fullName>
        <ecNumber evidence="1">5.1.3.9</ecNumber>
    </recommendedName>
    <alternativeName>
        <fullName evidence="1">ManNAc-6-P epimerase</fullName>
    </alternativeName>
</protein>
<organism>
    <name type="scientific">Staphylococcus aureus (strain JH1)</name>
    <dbReference type="NCBI Taxonomy" id="359787"/>
    <lineage>
        <taxon>Bacteria</taxon>
        <taxon>Bacillati</taxon>
        <taxon>Bacillota</taxon>
        <taxon>Bacilli</taxon>
        <taxon>Bacillales</taxon>
        <taxon>Staphylococcaceae</taxon>
        <taxon>Staphylococcus</taxon>
    </lineage>
</organism>